<sequence>MPPSRLRLLPLLLPLLWLLVLAPGRPASGLSTCKTIDMELVKRKRIEAIRGQILSKLRLASPPSQGDVPPGPLPEAVLALYNSTRDRVAGESAEPEPEPEPDYYAKEVTRVLMVDNSHNIYKSIETVAHSIYMFFNTSELREAVPDPLLLSRAELRMQRLKLNVEQHVELYQKYSNNSWRYLSNQLLTPSDTPEWLSFDVTGVVRQWLSQGEELEGFRFSAHCSCDSKDNTLRVEINGIGPKRRGDLAAIHGMNRPFLLLMATPLERAQHLHSSRHRRGLDTNYCFSSTEKNCCVRQLYIDFRKDLGWKWIHEPKGYHANFCLGPCPYIWSLDTQYSKVLALYNQHNPGASAAPCCVPQALEPLPIVYYVGRKAKVEQLSNMIVRSCKCS</sequence>
<keyword id="KW-0165">Cleavage on pair of basic residues</keyword>
<keyword id="KW-1015">Disulfide bond</keyword>
<keyword id="KW-0272">Extracellular matrix</keyword>
<keyword id="KW-0325">Glycoprotein</keyword>
<keyword id="KW-0339">Growth factor</keyword>
<keyword id="KW-0497">Mitogen</keyword>
<keyword id="KW-1185">Reference proteome</keyword>
<keyword id="KW-0964">Secreted</keyword>
<keyword id="KW-0732">Signal</keyword>
<feature type="signal peptide" evidence="1">
    <location>
        <begin position="1"/>
        <end position="29"/>
    </location>
</feature>
<feature type="chain" id="PRO_0000033758" description="Latency-associated peptide" evidence="1">
    <location>
        <begin position="30"/>
        <end position="278"/>
    </location>
</feature>
<feature type="chain" id="PRO_0000033759" description="Transforming growth factor beta-1" evidence="1">
    <location>
        <begin position="279"/>
        <end position="390"/>
    </location>
</feature>
<feature type="region of interest" description="Straightjacket domain" evidence="3">
    <location>
        <begin position="30"/>
        <end position="74"/>
    </location>
</feature>
<feature type="region of interest" description="Arm domain" evidence="3">
    <location>
        <begin position="75"/>
        <end position="271"/>
    </location>
</feature>
<feature type="region of interest" description="Bowtie tail" evidence="1">
    <location>
        <begin position="226"/>
        <end position="252"/>
    </location>
</feature>
<feature type="short sequence motif" description="Cell attachment site" evidence="4">
    <location>
        <begin position="244"/>
        <end position="246"/>
    </location>
</feature>
<feature type="site" description="Cleavage; by FURIN" evidence="1">
    <location>
        <begin position="278"/>
        <end position="279"/>
    </location>
</feature>
<feature type="glycosylation site" description="N-linked (GlcNAc...) asparagine" evidence="4">
    <location>
        <position position="82"/>
    </location>
</feature>
<feature type="glycosylation site" description="N-linked (GlcNAc...) asparagine" evidence="4">
    <location>
        <position position="136"/>
    </location>
</feature>
<feature type="glycosylation site" description="N-linked (GlcNAc...) asparagine" evidence="4">
    <location>
        <position position="176"/>
    </location>
</feature>
<feature type="disulfide bond" description="Interchain (with C-1359 or C-1384 in LTBP1); in inactive form" evidence="3">
    <location>
        <position position="33"/>
    </location>
</feature>
<feature type="disulfide bond" description="Interchain (with C-225)" evidence="1">
    <location>
        <position position="223"/>
    </location>
</feature>
<feature type="disulfide bond" description="Interchain (with C-223)" evidence="1">
    <location>
        <position position="225"/>
    </location>
</feature>
<feature type="disulfide bond" evidence="1">
    <location>
        <begin position="285"/>
        <end position="294"/>
    </location>
</feature>
<feature type="disulfide bond" evidence="1">
    <location>
        <begin position="293"/>
        <end position="356"/>
    </location>
</feature>
<feature type="disulfide bond" evidence="1">
    <location>
        <begin position="322"/>
        <end position="387"/>
    </location>
</feature>
<feature type="disulfide bond" evidence="1">
    <location>
        <begin position="326"/>
        <end position="389"/>
    </location>
</feature>
<feature type="disulfide bond" description="Interchain" evidence="1">
    <location>
        <position position="355"/>
    </location>
</feature>
<feature type="sequence conflict" description="In Ref. 3; AAD49347." evidence="5" ref="3">
    <original>G</original>
    <variation>P</variation>
    <location>
        <position position="279"/>
    </location>
</feature>
<feature type="sequence conflict" description="In Ref. 2; AAC83807." evidence="5" ref="2">
    <original>F</original>
    <variation>S</variation>
    <location>
        <position position="286"/>
    </location>
</feature>
<feature type="sequence conflict" description="In Ref. 2; AAC83807." evidence="5" ref="2">
    <original>K</original>
    <variation>E</variation>
    <location>
        <position position="309"/>
    </location>
</feature>
<feature type="sequence conflict" description="In Ref. 2; AAC83807." evidence="5" ref="2">
    <original>C</original>
    <variation>R</variation>
    <location>
        <position position="322"/>
    </location>
</feature>
<feature type="sequence conflict" description="In Ref. 2; AAC83807." evidence="5" ref="2">
    <original>A</original>
    <variation>G</variation>
    <location>
        <position position="350"/>
    </location>
</feature>
<gene>
    <name type="primary">TGFB1</name>
</gene>
<proteinExistence type="evidence at transcript level"/>
<comment type="function">
    <text evidence="1">Transforming growth factor beta-1 proprotein: Precursor of the Latency-associated peptide (LAP) and Transforming growth factor beta-1 (TGF-beta-1) chains, which constitute the regulatory and active subunit of TGF-beta-1, respectively.</text>
</comment>
<comment type="function">
    <molecule>Latency-associated peptide</molecule>
    <text evidence="1">Required to maintain the Transforming growth factor beta-1 (TGF-beta-1) chain in a latent state during storage in extracellular matrix. Associates non-covalently with TGF-beta-1 and regulates its activation via interaction with 'milieu molecules', such as LTBP1, LRRC32/GARP and LRRC33/NRROS, that control activation of TGF-beta-1. Interaction with LRRC33/NRROS regulates activation of TGF-beta-1 in macrophages and microglia. Interaction with LRRC32/GARP controls activation of TGF-beta-1 on the surface of activated regulatory T-cells (Tregs). Interaction with integrins (ITGAV:ITGB6 or ITGAV:ITGB8) results in distortion of the Latency-associated peptide chain and subsequent release of the active TGF-beta-1.</text>
</comment>
<comment type="function">
    <molecule>Transforming growth factor beta-1</molecule>
    <text evidence="1 2">Multifunctional protein that regulates the growth and differentiation of various cell types and is involved in various processes, such as normal development, immune function, microglia function and responses to neurodegeneration (By similarity). Activation into mature form follows different steps: following cleavage of the proprotein in the Golgi apparatus, Latency-associated peptide (LAP) and Transforming growth factor beta-1 (TGF-beta-1) chains remain non-covalently linked rendering TGF-beta-1 inactive during storage in extracellular matrix. At the same time, LAP chain interacts with 'milieu molecules', such as LTBP1, LRRC32/GARP and LRRC33/NRROS that control activation of TGF-beta-1 and maintain it in a latent state during storage in extracellular milieus. TGF-beta-1 is released from LAP by integrins (ITGAV:ITGB6 or ITGAV:ITGB8): integrin-binding to LAP stabilizes an alternative conformation of the LAP bowtie tail and results in distortion of the LAP chain and subsequent release of the active TGF-beta-1. Once activated following release of LAP, TGF-beta-1 acts by binding to TGF-beta receptors (TGFBR1 and TGFBR2), which transduce signal (By similarity). While expressed by many cells types, TGF-beta-1 only has a very localized range of action within cell environment thanks to fine regulation of its activation by Latency-associated peptide chain (LAP) and 'milieu molecules'. Plays an important role in bone remodeling: acts as a potent stimulator of osteoblastic bone formation, causing chemotaxis, proliferation and differentiation in committed osteoblasts. Can promote either T-helper 17 cells (Th17) or regulatory T-cells (Treg) lineage differentiation in a concentration-dependent manner. At high concentrations, leads to FOXP3-mediated suppression of RORC and down-regulation of IL-17 expression, favoring Treg cell development. At low concentrations in concert with IL-6 and IL-21, leads to expression of the IL-17 and IL-23 receptors, favoring differentiation to Th17 cells (By similarity). Stimulates sustained production of collagen through the activation of CREB3L1 by regulated intramembrane proteolysis (RIP). Mediates SMAD2/3 activation by inducing its phosphorylation and subsequent translocation to the nucleus. Positively regulates odontoblastic differentiation in dental papilla cells, via promotion of IPO7-mediated translocation of phosphorylated SMAD2 to the nucleus and subsequent transcription of target genes (By similarity). Can induce epithelial-to-mesenchymal transition (EMT) and cell migration in various cell types (By similarity).</text>
</comment>
<comment type="subunit">
    <text evidence="1">Homodimer; disulfide-linked. Interacts with the serine proteases, HTRA1 and HTRA3: the interaction with either inhibits TGFB1-mediated signaling and the HTRA protease activity is required for this inhibition. May interact with THSD4; this interaction may lead to sequestration by FBN1 microfibril assembly and attenuation of TGFB signaling. Interacts with CD109, DPT and ASPN. Interacts with EFEMP2. Interacts with TSKU; the interaction contributes to regulation of the hair cycle. Interacts with TGFBR3 (By similarity).</text>
</comment>
<comment type="subunit">
    <molecule>Latency-associated peptide</molecule>
    <text evidence="1 2">Homodimer; disulfide-linked. Interacts with transforming growth factor beta-1 (TGF-beta-1) chain; interaction is non-covalent and maintains TGF-beta-1 in a latent state; each latency-associated peptide (LAP) monomer interacts with TGF-beta-1 in the other monomer. Interacts with LTBP1; leading to regulation of TGF-beta-1 activation. Interacts with LRRC32/GARP; leading to regulation of TGF-beta-1 activation on the surface of activated regulatory T-cells (Tregs). Interacts with LRRC33/NRROS; leading to regulation of TGF-beta-1 in macrophages and microglia. Interacts (via cell attachment site) with integrins ITGAV and ITGB6 (ITGAV:ITGB6), leading to release of the active TGF-beta-1. Interacts with NREP; the interaction results in a decrease in TGFB1 autoinduction. Interacts with HSP90AB1; inhibits latent TGFB1 activation.</text>
</comment>
<comment type="subunit">
    <molecule>Transforming growth factor beta-1</molecule>
    <text evidence="1 2">Homodimer; disulfide-linked. Interacts with TGF-beta receptors (TGFBR1 and TGFBR2), leading to signal transduction.</text>
</comment>
<comment type="subcellular location">
    <molecule>Latency-associated peptide</molecule>
    <subcellularLocation>
        <location evidence="1">Secreted</location>
        <location evidence="1">Extracellular space</location>
        <location evidence="1">Extracellular matrix</location>
    </subcellularLocation>
</comment>
<comment type="subcellular location">
    <molecule>Transforming growth factor beta-1</molecule>
    <subcellularLocation>
        <location evidence="1">Secreted</location>
    </subcellularLocation>
</comment>
<comment type="domain">
    <molecule>Latency-associated peptide</molecule>
    <text evidence="3">The 'straitjacket' and 'arm' domains encircle the Transforming growth factor beta-1 (TGF-beta-1) monomers and are fastened together by strong bonding between Lys-56 and Tyr-103/Tyr-104.</text>
</comment>
<comment type="domain">
    <molecule>Latency-associated peptide</molecule>
    <text evidence="1">The cell attachment site motif mediates binding to integrins (ITGAV:ITGB6 or ITGAV:ITGB8). The motif locates to a long loop in the arm domain called the bowtie tail. Integrin-binding stabilizes an alternative conformation of the bowtie tail. Activation by integrin requires force application by the actin cytoskeleton, which is resisted by the 'milieu molecules' (such as LTBP1, LRRC32/GARP and/or LRRC33/NRROS), resulting in distortion of the prodomain and release of the active TGF-beta-1.</text>
</comment>
<comment type="PTM">
    <text evidence="1">Transforming growth factor beta-1 proprotein: The precursor proprotein is cleaved in the Golgi apparatus by FURIN to form Transforming growth factor beta-1 (TGF-beta-1) and Latency-associated peptide (LAP) chains, which remain non-covalently linked, rendering TGF-beta-1 inactive.</text>
</comment>
<comment type="PTM">
    <molecule>Latency-associated peptide</molecule>
    <text evidence="1">N-glycosylated. Deglycosylation leads to activation of Transforming growth factor beta-1 (TGF-beta-1); mechanisms triggering deglycosylation-driven activation of TGF-beta-1 are however unclear.</text>
</comment>
<comment type="similarity">
    <text evidence="5">Belongs to the TGF-beta family.</text>
</comment>
<name>TGFB1_CAVPO</name>
<evidence type="ECO:0000250" key="1">
    <source>
        <dbReference type="UniProtKB" id="P01137"/>
    </source>
</evidence>
<evidence type="ECO:0000250" key="2">
    <source>
        <dbReference type="UniProtKB" id="P04202"/>
    </source>
</evidence>
<evidence type="ECO:0000250" key="3">
    <source>
        <dbReference type="UniProtKB" id="P07200"/>
    </source>
</evidence>
<evidence type="ECO:0000255" key="4"/>
<evidence type="ECO:0000305" key="5"/>
<organism>
    <name type="scientific">Cavia porcellus</name>
    <name type="common">Guinea pig</name>
    <dbReference type="NCBI Taxonomy" id="10141"/>
    <lineage>
        <taxon>Eukaryota</taxon>
        <taxon>Metazoa</taxon>
        <taxon>Chordata</taxon>
        <taxon>Craniata</taxon>
        <taxon>Vertebrata</taxon>
        <taxon>Euteleostomi</taxon>
        <taxon>Mammalia</taxon>
        <taxon>Eutheria</taxon>
        <taxon>Euarchontoglires</taxon>
        <taxon>Glires</taxon>
        <taxon>Rodentia</taxon>
        <taxon>Hystricomorpha</taxon>
        <taxon>Caviidae</taxon>
        <taxon>Cavia</taxon>
    </lineage>
</organism>
<protein>
    <recommendedName>
        <fullName>Transforming growth factor beta-1 proprotein</fullName>
    </recommendedName>
    <component>
        <recommendedName>
            <fullName>Latency-associated peptide</fullName>
            <shortName>LAP</shortName>
        </recommendedName>
    </component>
    <component>
        <recommendedName>
            <fullName>Transforming growth factor beta-1</fullName>
            <shortName>TGF-beta-1</shortName>
        </recommendedName>
    </component>
</protein>
<accession>Q9Z1Y6</accession>
<accession>Q9QZB3</accession>
<accession>Q9R148</accession>
<dbReference type="EMBL" id="AF191297">
    <property type="protein sequence ID" value="AAF02780.1"/>
    <property type="molecule type" value="mRNA"/>
</dbReference>
<dbReference type="EMBL" id="AF097509">
    <property type="protein sequence ID" value="AAC83807.1"/>
    <property type="molecule type" value="Genomic_DNA"/>
</dbReference>
<dbReference type="EMBL" id="AF169347">
    <property type="protein sequence ID" value="AAD49347.1"/>
    <property type="molecule type" value="mRNA"/>
</dbReference>
<dbReference type="RefSeq" id="NP_001166494.1">
    <property type="nucleotide sequence ID" value="NM_001173023.1"/>
</dbReference>
<dbReference type="SMR" id="Q9Z1Y6"/>
<dbReference type="FunCoup" id="Q9Z1Y6">
    <property type="interactions" value="1006"/>
</dbReference>
<dbReference type="STRING" id="10141.ENSCPOP00000001098"/>
<dbReference type="GlyCosmos" id="Q9Z1Y6">
    <property type="glycosylation" value="3 sites, No reported glycans"/>
</dbReference>
<dbReference type="GeneID" id="100135628"/>
<dbReference type="KEGG" id="cpoc:100135628"/>
<dbReference type="CTD" id="7040"/>
<dbReference type="eggNOG" id="KOG3900">
    <property type="taxonomic scope" value="Eukaryota"/>
</dbReference>
<dbReference type="InParanoid" id="Q9Z1Y6"/>
<dbReference type="OrthoDB" id="8863549at2759"/>
<dbReference type="Proteomes" id="UP000005447">
    <property type="component" value="Unassembled WGS sequence"/>
</dbReference>
<dbReference type="GO" id="GO:0072562">
    <property type="term" value="C:blood microparticle"/>
    <property type="evidence" value="ECO:0000250"/>
    <property type="project" value="AgBase"/>
</dbReference>
<dbReference type="GO" id="GO:0009986">
    <property type="term" value="C:cell surface"/>
    <property type="evidence" value="ECO:0000250"/>
    <property type="project" value="UniProtKB"/>
</dbReference>
<dbReference type="GO" id="GO:0005737">
    <property type="term" value="C:cytoplasm"/>
    <property type="evidence" value="ECO:0000250"/>
    <property type="project" value="UniProtKB"/>
</dbReference>
<dbReference type="GO" id="GO:0005615">
    <property type="term" value="C:extracellular space"/>
    <property type="evidence" value="ECO:0000250"/>
    <property type="project" value="UniProtKB"/>
</dbReference>
<dbReference type="GO" id="GO:0005634">
    <property type="term" value="C:nucleus"/>
    <property type="evidence" value="ECO:0000250"/>
    <property type="project" value="UniProtKB"/>
</dbReference>
<dbReference type="GO" id="GO:0005125">
    <property type="term" value="F:cytokine activity"/>
    <property type="evidence" value="ECO:0007669"/>
    <property type="project" value="TreeGrafter"/>
</dbReference>
<dbReference type="GO" id="GO:0008083">
    <property type="term" value="F:growth factor activity"/>
    <property type="evidence" value="ECO:0007669"/>
    <property type="project" value="UniProtKB-KW"/>
</dbReference>
<dbReference type="GO" id="GO:0034713">
    <property type="term" value="F:type I transforming growth factor beta receptor binding"/>
    <property type="evidence" value="ECO:0000250"/>
    <property type="project" value="AgBase"/>
</dbReference>
<dbReference type="GO" id="GO:0005114">
    <property type="term" value="F:type II transforming growth factor beta receptor binding"/>
    <property type="evidence" value="ECO:0000250"/>
    <property type="project" value="UniProtKB"/>
</dbReference>
<dbReference type="GO" id="GO:0034714">
    <property type="term" value="F:type III transforming growth factor beta receptor binding"/>
    <property type="evidence" value="ECO:0000250"/>
    <property type="project" value="AgBase"/>
</dbReference>
<dbReference type="GO" id="GO:0006754">
    <property type="term" value="P:ATP biosynthetic process"/>
    <property type="evidence" value="ECO:0000250"/>
    <property type="project" value="UniProtKB"/>
</dbReference>
<dbReference type="GO" id="GO:0045216">
    <property type="term" value="P:cell-cell junction organization"/>
    <property type="evidence" value="ECO:0000250"/>
    <property type="project" value="UniProtKB"/>
</dbReference>
<dbReference type="GO" id="GO:0071560">
    <property type="term" value="P:cellular response to transforming growth factor beta stimulus"/>
    <property type="evidence" value="ECO:0000250"/>
    <property type="project" value="AgBase"/>
</dbReference>
<dbReference type="GO" id="GO:0002062">
    <property type="term" value="P:chondrocyte differentiation"/>
    <property type="evidence" value="ECO:0000250"/>
    <property type="project" value="UniProtKB"/>
</dbReference>
<dbReference type="GO" id="GO:0001837">
    <property type="term" value="P:epithelial to mesenchymal transition"/>
    <property type="evidence" value="ECO:0000250"/>
    <property type="project" value="UniProtKB"/>
</dbReference>
<dbReference type="GO" id="GO:0085029">
    <property type="term" value="P:extracellular matrix assembly"/>
    <property type="evidence" value="ECO:0000250"/>
    <property type="project" value="UniProtKB"/>
</dbReference>
<dbReference type="GO" id="GO:0097191">
    <property type="term" value="P:extrinsic apoptotic signaling pathway"/>
    <property type="evidence" value="ECO:0000250"/>
    <property type="project" value="UniProtKB"/>
</dbReference>
<dbReference type="GO" id="GO:0002244">
    <property type="term" value="P:hematopoietic progenitor cell differentiation"/>
    <property type="evidence" value="ECO:0000250"/>
    <property type="project" value="UniProtKB"/>
</dbReference>
<dbReference type="GO" id="GO:0030214">
    <property type="term" value="P:hyaluronan catabolic process"/>
    <property type="evidence" value="ECO:0000250"/>
    <property type="project" value="UniProtKB"/>
</dbReference>
<dbReference type="GO" id="GO:0031293">
    <property type="term" value="P:membrane protein intracellular domain proteolysis"/>
    <property type="evidence" value="ECO:0000250"/>
    <property type="project" value="UniProtKB"/>
</dbReference>
<dbReference type="GO" id="GO:0043537">
    <property type="term" value="P:negative regulation of blood vessel endothelial cell migration"/>
    <property type="evidence" value="ECO:0000250"/>
    <property type="project" value="UniProtKB"/>
</dbReference>
<dbReference type="GO" id="GO:0045786">
    <property type="term" value="P:negative regulation of cell cycle"/>
    <property type="evidence" value="ECO:0000250"/>
    <property type="project" value="UniProtKB"/>
</dbReference>
<dbReference type="GO" id="GO:0030308">
    <property type="term" value="P:negative regulation of cell growth"/>
    <property type="evidence" value="ECO:0000250"/>
    <property type="project" value="UniProtKB"/>
</dbReference>
<dbReference type="GO" id="GO:0008285">
    <property type="term" value="P:negative regulation of cell population proliferation"/>
    <property type="evidence" value="ECO:0000250"/>
    <property type="project" value="UniProtKB"/>
</dbReference>
<dbReference type="GO" id="GO:2000048">
    <property type="term" value="P:negative regulation of cell-cell adhesion mediated by cadherin"/>
    <property type="evidence" value="ECO:0000250"/>
    <property type="project" value="UniProtKB"/>
</dbReference>
<dbReference type="GO" id="GO:0045892">
    <property type="term" value="P:negative regulation of DNA-templated transcription"/>
    <property type="evidence" value="ECO:0000250"/>
    <property type="project" value="UniProtKB"/>
</dbReference>
<dbReference type="GO" id="GO:0050680">
    <property type="term" value="P:negative regulation of epithelial cell proliferation"/>
    <property type="evidence" value="ECO:0000250"/>
    <property type="project" value="UniProtKB"/>
</dbReference>
<dbReference type="GO" id="GO:0045599">
    <property type="term" value="P:negative regulation of fat cell differentiation"/>
    <property type="evidence" value="ECO:0000250"/>
    <property type="project" value="UniProtKB"/>
</dbReference>
<dbReference type="GO" id="GO:0010629">
    <property type="term" value="P:negative regulation of gene expression"/>
    <property type="evidence" value="ECO:0000250"/>
    <property type="project" value="BHF-UCL"/>
</dbReference>
<dbReference type="GO" id="GO:1900126">
    <property type="term" value="P:negative regulation of hyaluronan biosynthetic process"/>
    <property type="evidence" value="ECO:0000250"/>
    <property type="project" value="UniProtKB"/>
</dbReference>
<dbReference type="GO" id="GO:0010936">
    <property type="term" value="P:negative regulation of macrophage cytokine production"/>
    <property type="evidence" value="ECO:0000250"/>
    <property type="project" value="AgBase"/>
</dbReference>
<dbReference type="GO" id="GO:0045662">
    <property type="term" value="P:negative regulation of myoblast differentiation"/>
    <property type="evidence" value="ECO:0000250"/>
    <property type="project" value="UniProtKB"/>
</dbReference>
<dbReference type="GO" id="GO:0048642">
    <property type="term" value="P:negative regulation of skeletal muscle tissue development"/>
    <property type="evidence" value="ECO:0000250"/>
    <property type="project" value="UniProtKB"/>
</dbReference>
<dbReference type="GO" id="GO:0071895">
    <property type="term" value="P:odontoblast differentiation"/>
    <property type="evidence" value="ECO:0000250"/>
    <property type="project" value="UniProtKB"/>
</dbReference>
<dbReference type="GO" id="GO:0006796">
    <property type="term" value="P:phosphate-containing compound metabolic process"/>
    <property type="evidence" value="ECO:0000250"/>
    <property type="project" value="UniProtKB"/>
</dbReference>
<dbReference type="GO" id="GO:0043536">
    <property type="term" value="P:positive regulation of blood vessel endothelial cell migration"/>
    <property type="evidence" value="ECO:0000250"/>
    <property type="project" value="UniProtKB"/>
</dbReference>
<dbReference type="GO" id="GO:0051781">
    <property type="term" value="P:positive regulation of cell division"/>
    <property type="evidence" value="ECO:0007669"/>
    <property type="project" value="UniProtKB-KW"/>
</dbReference>
<dbReference type="GO" id="GO:0030335">
    <property type="term" value="P:positive regulation of cell migration"/>
    <property type="evidence" value="ECO:0000250"/>
    <property type="project" value="UniProtKB"/>
</dbReference>
<dbReference type="GO" id="GO:0008284">
    <property type="term" value="P:positive regulation of cell population proliferation"/>
    <property type="evidence" value="ECO:0000250"/>
    <property type="project" value="UniProtKB"/>
</dbReference>
<dbReference type="GO" id="GO:0050921">
    <property type="term" value="P:positive regulation of chemotaxis"/>
    <property type="evidence" value="ECO:0000250"/>
    <property type="project" value="UniProtKB"/>
</dbReference>
<dbReference type="GO" id="GO:0032967">
    <property type="term" value="P:positive regulation of collagen biosynthetic process"/>
    <property type="evidence" value="ECO:0000250"/>
    <property type="project" value="UniProtKB"/>
</dbReference>
<dbReference type="GO" id="GO:0045742">
    <property type="term" value="P:positive regulation of epidermal growth factor receptor signaling pathway"/>
    <property type="evidence" value="ECO:0000250"/>
    <property type="project" value="UniProtKB"/>
</dbReference>
<dbReference type="GO" id="GO:0010718">
    <property type="term" value="P:positive regulation of epithelial to mesenchymal transition"/>
    <property type="evidence" value="ECO:0000250"/>
    <property type="project" value="UniProtKB"/>
</dbReference>
<dbReference type="GO" id="GO:0070374">
    <property type="term" value="P:positive regulation of ERK1 and ERK2 cascade"/>
    <property type="evidence" value="ECO:0000250"/>
    <property type="project" value="UniProtKB"/>
</dbReference>
<dbReference type="GO" id="GO:0010763">
    <property type="term" value="P:positive regulation of fibroblast migration"/>
    <property type="evidence" value="ECO:0000250"/>
    <property type="project" value="UniProtKB"/>
</dbReference>
<dbReference type="GO" id="GO:0010628">
    <property type="term" value="P:positive regulation of gene expression"/>
    <property type="evidence" value="ECO:0000250"/>
    <property type="project" value="UniProtKB"/>
</dbReference>
<dbReference type="GO" id="GO:0032740">
    <property type="term" value="P:positive regulation of interleukin-17 production"/>
    <property type="evidence" value="ECO:0000250"/>
    <property type="project" value="UniProtKB"/>
</dbReference>
<dbReference type="GO" id="GO:0048298">
    <property type="term" value="P:positive regulation of isotype switching to IgA isotypes"/>
    <property type="evidence" value="ECO:0000250"/>
    <property type="project" value="AgBase"/>
</dbReference>
<dbReference type="GO" id="GO:0014008">
    <property type="term" value="P:positive regulation of microglia differentiation"/>
    <property type="evidence" value="ECO:0000250"/>
    <property type="project" value="UniProtKB"/>
</dbReference>
<dbReference type="GO" id="GO:0042307">
    <property type="term" value="P:positive regulation of protein import into nucleus"/>
    <property type="evidence" value="ECO:0000250"/>
    <property type="project" value="AgBase"/>
</dbReference>
<dbReference type="GO" id="GO:0051247">
    <property type="term" value="P:positive regulation of protein metabolic process"/>
    <property type="evidence" value="ECO:0000250"/>
    <property type="project" value="UniProtKB"/>
</dbReference>
<dbReference type="GO" id="GO:0050714">
    <property type="term" value="P:positive regulation of protein secretion"/>
    <property type="evidence" value="ECO:0000250"/>
    <property type="project" value="UniProtKB"/>
</dbReference>
<dbReference type="GO" id="GO:0031334">
    <property type="term" value="P:positive regulation of protein-containing complex assembly"/>
    <property type="evidence" value="ECO:0000250"/>
    <property type="project" value="UniProtKB"/>
</dbReference>
<dbReference type="GO" id="GO:0060391">
    <property type="term" value="P:positive regulation of SMAD protein signal transduction"/>
    <property type="evidence" value="ECO:0000250"/>
    <property type="project" value="UniProtKB"/>
</dbReference>
<dbReference type="GO" id="GO:0032930">
    <property type="term" value="P:positive regulation of superoxide anion generation"/>
    <property type="evidence" value="ECO:0000250"/>
    <property type="project" value="UniProtKB"/>
</dbReference>
<dbReference type="GO" id="GO:0045944">
    <property type="term" value="P:positive regulation of transcription by RNA polymerase II"/>
    <property type="evidence" value="ECO:0000250"/>
    <property type="project" value="AgBase"/>
</dbReference>
<dbReference type="GO" id="GO:0032801">
    <property type="term" value="P:receptor catabolic process"/>
    <property type="evidence" value="ECO:0000250"/>
    <property type="project" value="UniProtKB"/>
</dbReference>
<dbReference type="GO" id="GO:0070723">
    <property type="term" value="P:response to cholesterol"/>
    <property type="evidence" value="ECO:0000250"/>
    <property type="project" value="UniProtKB"/>
</dbReference>
<dbReference type="GO" id="GO:0032355">
    <property type="term" value="P:response to estradiol"/>
    <property type="evidence" value="ECO:0000250"/>
    <property type="project" value="UniProtKB"/>
</dbReference>
<dbReference type="GO" id="GO:0032570">
    <property type="term" value="P:response to progesterone"/>
    <property type="evidence" value="ECO:0000250"/>
    <property type="project" value="UniProtKB"/>
</dbReference>
<dbReference type="GO" id="GO:0009611">
    <property type="term" value="P:response to wounding"/>
    <property type="evidence" value="ECO:0000250"/>
    <property type="project" value="AgBase"/>
</dbReference>
<dbReference type="GO" id="GO:0007435">
    <property type="term" value="P:salivary gland morphogenesis"/>
    <property type="evidence" value="ECO:0000250"/>
    <property type="project" value="AgBase"/>
</dbReference>
<dbReference type="GO" id="GO:0007179">
    <property type="term" value="P:transforming growth factor beta receptor signaling pathway"/>
    <property type="evidence" value="ECO:0000250"/>
    <property type="project" value="UniProtKB"/>
</dbReference>
<dbReference type="GO" id="GO:0035295">
    <property type="term" value="P:tube development"/>
    <property type="evidence" value="ECO:0007669"/>
    <property type="project" value="UniProtKB-ARBA"/>
</dbReference>
<dbReference type="CDD" id="cd19384">
    <property type="entry name" value="TGF_beta_TGFB1"/>
    <property type="match status" value="1"/>
</dbReference>
<dbReference type="FunFam" id="2.10.90.10:FF:000004">
    <property type="entry name" value="Transforming growth factor beta"/>
    <property type="match status" value="1"/>
</dbReference>
<dbReference type="FunFam" id="2.60.120.970:FF:000010">
    <property type="entry name" value="Transforming growth factor beta"/>
    <property type="match status" value="1"/>
</dbReference>
<dbReference type="Gene3D" id="2.60.120.970">
    <property type="match status" value="1"/>
</dbReference>
<dbReference type="Gene3D" id="2.10.90.10">
    <property type="entry name" value="Cystine-knot cytokines"/>
    <property type="match status" value="1"/>
</dbReference>
<dbReference type="InterPro" id="IPR029034">
    <property type="entry name" value="Cystine-knot_cytokine"/>
</dbReference>
<dbReference type="InterPro" id="IPR001839">
    <property type="entry name" value="TGF-b_C"/>
</dbReference>
<dbReference type="InterPro" id="IPR001111">
    <property type="entry name" value="TGF-b_propeptide"/>
</dbReference>
<dbReference type="InterPro" id="IPR016319">
    <property type="entry name" value="TGF-beta"/>
</dbReference>
<dbReference type="InterPro" id="IPR015615">
    <property type="entry name" value="TGF-beta-rel"/>
</dbReference>
<dbReference type="InterPro" id="IPR003939">
    <property type="entry name" value="TGFb1"/>
</dbReference>
<dbReference type="InterPro" id="IPR017948">
    <property type="entry name" value="TGFb_CS"/>
</dbReference>
<dbReference type="PANTHER" id="PTHR11848">
    <property type="entry name" value="TGF-BETA FAMILY"/>
    <property type="match status" value="1"/>
</dbReference>
<dbReference type="PANTHER" id="PTHR11848:SF125">
    <property type="entry name" value="TRANSFORMING GROWTH FACTOR BETA-1 PROPROTEIN"/>
    <property type="match status" value="1"/>
</dbReference>
<dbReference type="Pfam" id="PF00019">
    <property type="entry name" value="TGF_beta"/>
    <property type="match status" value="1"/>
</dbReference>
<dbReference type="Pfam" id="PF00688">
    <property type="entry name" value="TGFb_propeptide"/>
    <property type="match status" value="1"/>
</dbReference>
<dbReference type="PIRSF" id="PIRSF001787">
    <property type="entry name" value="TGF-beta"/>
    <property type="match status" value="1"/>
</dbReference>
<dbReference type="PRINTS" id="PR01423">
    <property type="entry name" value="TGFBETA"/>
</dbReference>
<dbReference type="PRINTS" id="PR01424">
    <property type="entry name" value="TGFBETA1"/>
</dbReference>
<dbReference type="SMART" id="SM00204">
    <property type="entry name" value="TGFB"/>
    <property type="match status" value="1"/>
</dbReference>
<dbReference type="SUPFAM" id="SSF57501">
    <property type="entry name" value="Cystine-knot cytokines"/>
    <property type="match status" value="1"/>
</dbReference>
<dbReference type="PROSITE" id="PS00250">
    <property type="entry name" value="TGF_BETA_1"/>
    <property type="match status" value="1"/>
</dbReference>
<dbReference type="PROSITE" id="PS51362">
    <property type="entry name" value="TGF_BETA_2"/>
    <property type="match status" value="1"/>
</dbReference>
<reference key="1">
    <citation type="submission" date="1999-10" db="EMBL/GenBank/DDBJ databases">
        <title>Guinea pig transforming growth factor-beta in peritoneal exudates after BCG vaccination.</title>
        <authorList>
            <person name="Jeevan A."/>
            <person name="McMurray D.N."/>
            <person name="Yoshimura T."/>
        </authorList>
    </citation>
    <scope>NUCLEOTIDE SEQUENCE [MRNA]</scope>
    <source>
        <strain>Hartley</strain>
    </source>
</reference>
<reference key="2">
    <citation type="journal article" date="1998" name="Cytokine">
        <title>Spontaneous cytokine gene expression in normal guinea pig blood and tissues.</title>
        <authorList>
            <person name="Scarozza A.M."/>
            <person name="Ramsingh A.I."/>
            <person name="Wicher V."/>
            <person name="Wicher K."/>
        </authorList>
    </citation>
    <scope>NUCLEOTIDE SEQUENCE [GENOMIC DNA] OF 265-382</scope>
</reference>
<reference key="3">
    <citation type="submission" date="1999-07" db="EMBL/GenBank/DDBJ databases">
        <title>Guinea-pig transforming growth factor-beta expression in injured tracheal epithelium.</title>
        <authorList>
            <person name="Morishima Y."/>
            <person name="Uchida Y."/>
            <person name="Nomura A."/>
            <person name="Ishii Y."/>
            <person name="Sakamoto T."/>
            <person name="Sekizawa K."/>
        </authorList>
    </citation>
    <scope>NUCLEOTIDE SEQUENCE [MRNA] OF 279-371</scope>
    <source>
        <strain>Hartley</strain>
        <tissue>Trachea</tissue>
    </source>
</reference>